<comment type="function">
    <text evidence="1">Promotes RNA polymerase assembly. Latches the N- and C-terminal regions of the beta' subunit thereby facilitating its interaction with the beta and alpha subunits.</text>
</comment>
<comment type="catalytic activity">
    <reaction evidence="1">
        <text>RNA(n) + a ribonucleoside 5'-triphosphate = RNA(n+1) + diphosphate</text>
        <dbReference type="Rhea" id="RHEA:21248"/>
        <dbReference type="Rhea" id="RHEA-COMP:14527"/>
        <dbReference type="Rhea" id="RHEA-COMP:17342"/>
        <dbReference type="ChEBI" id="CHEBI:33019"/>
        <dbReference type="ChEBI" id="CHEBI:61557"/>
        <dbReference type="ChEBI" id="CHEBI:140395"/>
        <dbReference type="EC" id="2.7.7.6"/>
    </reaction>
</comment>
<comment type="subunit">
    <text evidence="1">The RNAP catalytic core consists of 2 alpha, 1 beta, 1 beta' and 1 omega subunit. When a sigma factor is associated with the core the holoenzyme is formed, which can initiate transcription.</text>
</comment>
<comment type="similarity">
    <text evidence="1">Belongs to the RNA polymerase subunit omega family.</text>
</comment>
<proteinExistence type="inferred from homology"/>
<reference key="1">
    <citation type="journal article" date="2004" name="Nat. Biotechnol.">
        <title>Complete genome sequence of the metabolically versatile photosynthetic bacterium Rhodopseudomonas palustris.</title>
        <authorList>
            <person name="Larimer F.W."/>
            <person name="Chain P."/>
            <person name="Hauser L."/>
            <person name="Lamerdin J.E."/>
            <person name="Malfatti S."/>
            <person name="Do L."/>
            <person name="Land M.L."/>
            <person name="Pelletier D.A."/>
            <person name="Beatty J.T."/>
            <person name="Lang A.S."/>
            <person name="Tabita F.R."/>
            <person name="Gibson J.L."/>
            <person name="Hanson T.E."/>
            <person name="Bobst C."/>
            <person name="Torres y Torres J.L."/>
            <person name="Peres C."/>
            <person name="Harrison F.H."/>
            <person name="Gibson J."/>
            <person name="Harwood C.S."/>
        </authorList>
    </citation>
    <scope>NUCLEOTIDE SEQUENCE [LARGE SCALE GENOMIC DNA]</scope>
    <source>
        <strain>ATCC BAA-98 / CGA009</strain>
    </source>
</reference>
<gene>
    <name evidence="1" type="primary">rpoZ</name>
    <name type="ordered locus">RPA2692</name>
</gene>
<protein>
    <recommendedName>
        <fullName evidence="1">DNA-directed RNA polymerase subunit omega</fullName>
        <shortName evidence="1">RNAP omega subunit</shortName>
        <ecNumber evidence="1">2.7.7.6</ecNumber>
    </recommendedName>
    <alternativeName>
        <fullName evidence="1">RNA polymerase omega subunit</fullName>
    </alternativeName>
    <alternativeName>
        <fullName evidence="1">Transcriptase subunit omega</fullName>
    </alternativeName>
</protein>
<dbReference type="EC" id="2.7.7.6" evidence="1"/>
<dbReference type="EMBL" id="BX572601">
    <property type="protein sequence ID" value="CAE28133.1"/>
    <property type="molecule type" value="Genomic_DNA"/>
</dbReference>
<dbReference type="RefSeq" id="WP_011158242.1">
    <property type="nucleotide sequence ID" value="NZ_CP116810.1"/>
</dbReference>
<dbReference type="SMR" id="Q6N6C5"/>
<dbReference type="STRING" id="258594.RPA2692"/>
<dbReference type="GeneID" id="66893767"/>
<dbReference type="eggNOG" id="COG1758">
    <property type="taxonomic scope" value="Bacteria"/>
</dbReference>
<dbReference type="HOGENOM" id="CLU_125406_2_0_5"/>
<dbReference type="PhylomeDB" id="Q6N6C5"/>
<dbReference type="GO" id="GO:0000428">
    <property type="term" value="C:DNA-directed RNA polymerase complex"/>
    <property type="evidence" value="ECO:0007669"/>
    <property type="project" value="UniProtKB-KW"/>
</dbReference>
<dbReference type="GO" id="GO:0003677">
    <property type="term" value="F:DNA binding"/>
    <property type="evidence" value="ECO:0007669"/>
    <property type="project" value="UniProtKB-UniRule"/>
</dbReference>
<dbReference type="GO" id="GO:0003899">
    <property type="term" value="F:DNA-directed RNA polymerase activity"/>
    <property type="evidence" value="ECO:0007669"/>
    <property type="project" value="UniProtKB-UniRule"/>
</dbReference>
<dbReference type="GO" id="GO:0006351">
    <property type="term" value="P:DNA-templated transcription"/>
    <property type="evidence" value="ECO:0007669"/>
    <property type="project" value="UniProtKB-UniRule"/>
</dbReference>
<dbReference type="Gene3D" id="3.90.940.10">
    <property type="match status" value="1"/>
</dbReference>
<dbReference type="HAMAP" id="MF_00366">
    <property type="entry name" value="RNApol_bact_RpoZ"/>
    <property type="match status" value="1"/>
</dbReference>
<dbReference type="InterPro" id="IPR003716">
    <property type="entry name" value="DNA-dir_RNA_pol_omega"/>
</dbReference>
<dbReference type="InterPro" id="IPR006110">
    <property type="entry name" value="Pol_omega/Rpo6/RPB6"/>
</dbReference>
<dbReference type="InterPro" id="IPR036161">
    <property type="entry name" value="RPB6/omega-like_sf"/>
</dbReference>
<dbReference type="NCBIfam" id="TIGR00690">
    <property type="entry name" value="rpoZ"/>
    <property type="match status" value="1"/>
</dbReference>
<dbReference type="PANTHER" id="PTHR34476">
    <property type="entry name" value="DNA-DIRECTED RNA POLYMERASE SUBUNIT OMEGA"/>
    <property type="match status" value="1"/>
</dbReference>
<dbReference type="PANTHER" id="PTHR34476:SF1">
    <property type="entry name" value="DNA-DIRECTED RNA POLYMERASE SUBUNIT OMEGA"/>
    <property type="match status" value="1"/>
</dbReference>
<dbReference type="Pfam" id="PF01192">
    <property type="entry name" value="RNA_pol_Rpb6"/>
    <property type="match status" value="1"/>
</dbReference>
<dbReference type="SMART" id="SM01409">
    <property type="entry name" value="RNA_pol_Rpb6"/>
    <property type="match status" value="1"/>
</dbReference>
<dbReference type="SUPFAM" id="SSF63562">
    <property type="entry name" value="RPB6/omega subunit-like"/>
    <property type="match status" value="1"/>
</dbReference>
<keyword id="KW-0240">DNA-directed RNA polymerase</keyword>
<keyword id="KW-0548">Nucleotidyltransferase</keyword>
<keyword id="KW-0804">Transcription</keyword>
<keyword id="KW-0808">Transferase</keyword>
<sequence length="130" mass="14368">MARVTVEDCIDKVDNRFDLVLLAAHRARMISSGSPLTIDRDNDKNPVVSLREIADQTISPEDLKEELVHSLQKFVEVDEPEPDTVPLIGSAGASVDADDTEVAMERMTEEELLKGLEGLAPPEEQPEEDE</sequence>
<name>RPOZ_RHOPA</name>
<evidence type="ECO:0000255" key="1">
    <source>
        <dbReference type="HAMAP-Rule" id="MF_00366"/>
    </source>
</evidence>
<evidence type="ECO:0000256" key="2">
    <source>
        <dbReference type="SAM" id="MobiDB-lite"/>
    </source>
</evidence>
<feature type="chain" id="PRO_0000237498" description="DNA-directed RNA polymerase subunit omega">
    <location>
        <begin position="1"/>
        <end position="130"/>
    </location>
</feature>
<feature type="region of interest" description="Disordered" evidence="2">
    <location>
        <begin position="108"/>
        <end position="130"/>
    </location>
</feature>
<accession>Q6N6C5</accession>
<organism>
    <name type="scientific">Rhodopseudomonas palustris (strain ATCC BAA-98 / CGA009)</name>
    <dbReference type="NCBI Taxonomy" id="258594"/>
    <lineage>
        <taxon>Bacteria</taxon>
        <taxon>Pseudomonadati</taxon>
        <taxon>Pseudomonadota</taxon>
        <taxon>Alphaproteobacteria</taxon>
        <taxon>Hyphomicrobiales</taxon>
        <taxon>Nitrobacteraceae</taxon>
        <taxon>Rhodopseudomonas</taxon>
    </lineage>
</organism>